<keyword id="KW-0007">Acetylation</keyword>
<keyword id="KW-1003">Cell membrane</keyword>
<keyword id="KW-0449">Lipoprotein</keyword>
<keyword id="KW-0472">Membrane</keyword>
<keyword id="KW-0732">Signal</keyword>
<sequence length="405" mass="44610">MKAKLALSIIGLVLASLVAGCIGGGTQTQTQTQGKSIKVAILFDVGGRGDLSFNDMAYLGAERAKKELGVKIEYMTPKSKEDMVPLLEQLAKSKEYDLLVLVGFLWTTPLNEVADKYPDQKFALIDSTTGKVRPNEVDILFREQEVAALMGVIASGMAYELGGDTIGAVAGMDIPPLWKFHIGYLFGAKYFEKKTGKHVKLLWQYTGTFGDTQVGYNTAMQLLQQGAKVLYGLAGLTHVGMFDAVKDWNEQGRGKALAMGQDASQEWYAPKYIPISGAKRVDVAVYDAIKMVVDGTWKGGIITLGLKENGVGYWDLDGVKQFAEFAKEAGKLKDMTPDEVVEIVKQQREKYIKPYVWEIVNELAEKIKNGEIVFKTPKSHDEYEQIINELEKGNLNAALKKGSVE</sequence>
<comment type="subcellular location">
    <subcellularLocation>
        <location evidence="2">Cell membrane</location>
        <topology evidence="2">Lipid-anchor</topology>
    </subcellularLocation>
</comment>
<comment type="similarity">
    <text evidence="3">Belongs to the BMP lipoprotein family.</text>
</comment>
<feature type="signal peptide" evidence="3">
    <location>
        <begin position="1"/>
        <end position="20"/>
    </location>
</feature>
<feature type="chain" id="PRO_0000018013" description="Uncharacterized lipoprotein PH1714">
    <location>
        <begin position="21"/>
        <end position="405"/>
    </location>
</feature>
<feature type="modified residue" description="N-acetylcysteine" evidence="1">
    <location>
        <position position="21"/>
    </location>
</feature>
<feature type="lipid moiety-binding region" description="S-archaeol cysteine" evidence="1">
    <location>
        <position position="21"/>
    </location>
</feature>
<name>Y1714_PYRHO</name>
<accession>O59403</accession>
<proteinExistence type="inferred from homology"/>
<dbReference type="EMBL" id="BA000001">
    <property type="protein sequence ID" value="BAA30828.1"/>
    <property type="molecule type" value="Genomic_DNA"/>
</dbReference>
<dbReference type="PIR" id="E71179">
    <property type="entry name" value="E71179"/>
</dbReference>
<dbReference type="RefSeq" id="WP_010885779.1">
    <property type="nucleotide sequence ID" value="NC_000961.1"/>
</dbReference>
<dbReference type="SMR" id="O59403"/>
<dbReference type="STRING" id="70601.gene:9378710"/>
<dbReference type="EnsemblBacteria" id="BAA30828">
    <property type="protein sequence ID" value="BAA30828"/>
    <property type="gene ID" value="BAA30828"/>
</dbReference>
<dbReference type="GeneID" id="1442560"/>
<dbReference type="KEGG" id="pho:PH1714"/>
<dbReference type="eggNOG" id="arCOG00258">
    <property type="taxonomic scope" value="Archaea"/>
</dbReference>
<dbReference type="OrthoDB" id="26626at2157"/>
<dbReference type="Proteomes" id="UP000000752">
    <property type="component" value="Chromosome"/>
</dbReference>
<dbReference type="GO" id="GO:0005886">
    <property type="term" value="C:plasma membrane"/>
    <property type="evidence" value="ECO:0007669"/>
    <property type="project" value="UniProtKB-SubCell"/>
</dbReference>
<dbReference type="CDD" id="cd06354">
    <property type="entry name" value="PBP1_PrnA-like"/>
    <property type="match status" value="1"/>
</dbReference>
<dbReference type="Gene3D" id="3.40.50.2300">
    <property type="match status" value="2"/>
</dbReference>
<dbReference type="InterPro" id="IPR050957">
    <property type="entry name" value="BMP_lipoprotein"/>
</dbReference>
<dbReference type="InterPro" id="IPR028082">
    <property type="entry name" value="Peripla_BP_I"/>
</dbReference>
<dbReference type="InterPro" id="IPR003760">
    <property type="entry name" value="PnrA-like"/>
</dbReference>
<dbReference type="PANTHER" id="PTHR34296:SF2">
    <property type="entry name" value="ABC TRANSPORTER GUANOSINE-BINDING PROTEIN NUPN"/>
    <property type="match status" value="1"/>
</dbReference>
<dbReference type="PANTHER" id="PTHR34296">
    <property type="entry name" value="TRANSCRIPTIONAL ACTIVATOR PROTEIN MED"/>
    <property type="match status" value="1"/>
</dbReference>
<dbReference type="Pfam" id="PF02608">
    <property type="entry name" value="Bmp"/>
    <property type="match status" value="1"/>
</dbReference>
<dbReference type="SUPFAM" id="SSF53822">
    <property type="entry name" value="Periplasmic binding protein-like I"/>
    <property type="match status" value="1"/>
</dbReference>
<dbReference type="PROSITE" id="PS51257">
    <property type="entry name" value="PROKAR_LIPOPROTEIN"/>
    <property type="match status" value="1"/>
</dbReference>
<reference key="1">
    <citation type="journal article" date="1998" name="DNA Res.">
        <title>Complete sequence and gene organization of the genome of a hyper-thermophilic archaebacterium, Pyrococcus horikoshii OT3.</title>
        <authorList>
            <person name="Kawarabayasi Y."/>
            <person name="Sawada M."/>
            <person name="Horikawa H."/>
            <person name="Haikawa Y."/>
            <person name="Hino Y."/>
            <person name="Yamamoto S."/>
            <person name="Sekine M."/>
            <person name="Baba S."/>
            <person name="Kosugi H."/>
            <person name="Hosoyama A."/>
            <person name="Nagai Y."/>
            <person name="Sakai M."/>
            <person name="Ogura K."/>
            <person name="Otsuka R."/>
            <person name="Nakazawa H."/>
            <person name="Takamiya M."/>
            <person name="Ohfuku Y."/>
            <person name="Funahashi T."/>
            <person name="Tanaka T."/>
            <person name="Kudoh Y."/>
            <person name="Yamazaki J."/>
            <person name="Kushida N."/>
            <person name="Oguchi A."/>
            <person name="Aoki K."/>
            <person name="Yoshizawa T."/>
            <person name="Nakamura Y."/>
            <person name="Robb F.T."/>
            <person name="Horikoshi K."/>
            <person name="Masuchi Y."/>
            <person name="Shizuya H."/>
            <person name="Kikuchi H."/>
        </authorList>
    </citation>
    <scope>NUCLEOTIDE SEQUENCE [LARGE SCALE GENOMIC DNA]</scope>
    <source>
        <strain>ATCC 700860 / DSM 12428 / JCM 9974 / NBRC 100139 / OT-3</strain>
    </source>
</reference>
<gene>
    <name type="ordered locus">PH1714</name>
    <name type="ORF">PHAM037</name>
</gene>
<organism>
    <name type="scientific">Pyrococcus horikoshii (strain ATCC 700860 / DSM 12428 / JCM 9974 / NBRC 100139 / OT-3)</name>
    <dbReference type="NCBI Taxonomy" id="70601"/>
    <lineage>
        <taxon>Archaea</taxon>
        <taxon>Methanobacteriati</taxon>
        <taxon>Methanobacteriota</taxon>
        <taxon>Thermococci</taxon>
        <taxon>Thermococcales</taxon>
        <taxon>Thermococcaceae</taxon>
        <taxon>Pyrococcus</taxon>
    </lineage>
</organism>
<protein>
    <recommendedName>
        <fullName>Uncharacterized lipoprotein PH1714</fullName>
    </recommendedName>
</protein>
<evidence type="ECO:0000255" key="1"/>
<evidence type="ECO:0000255" key="2">
    <source>
        <dbReference type="PROSITE-ProRule" id="PRU00303"/>
    </source>
</evidence>
<evidence type="ECO:0000305" key="3"/>